<feature type="chain" id="PRO_1000008164" description="Thiamine-phosphate synthase">
    <location>
        <begin position="1"/>
        <end position="207"/>
    </location>
</feature>
<feature type="binding site" evidence="1">
    <location>
        <begin position="35"/>
        <end position="39"/>
    </location>
    <ligand>
        <name>4-amino-2-methyl-5-(diphosphooxymethyl)pyrimidine</name>
        <dbReference type="ChEBI" id="CHEBI:57841"/>
    </ligand>
</feature>
<feature type="binding site" evidence="1">
    <location>
        <position position="67"/>
    </location>
    <ligand>
        <name>4-amino-2-methyl-5-(diphosphooxymethyl)pyrimidine</name>
        <dbReference type="ChEBI" id="CHEBI:57841"/>
    </ligand>
</feature>
<feature type="binding site" evidence="1">
    <location>
        <position position="68"/>
    </location>
    <ligand>
        <name>Mg(2+)</name>
        <dbReference type="ChEBI" id="CHEBI:18420"/>
    </ligand>
</feature>
<feature type="binding site" evidence="1">
    <location>
        <position position="86"/>
    </location>
    <ligand>
        <name>Mg(2+)</name>
        <dbReference type="ChEBI" id="CHEBI:18420"/>
    </ligand>
</feature>
<feature type="binding site" evidence="1">
    <location>
        <position position="105"/>
    </location>
    <ligand>
        <name>4-amino-2-methyl-5-(diphosphooxymethyl)pyrimidine</name>
        <dbReference type="ChEBI" id="CHEBI:57841"/>
    </ligand>
</feature>
<feature type="binding site" evidence="1">
    <location>
        <begin position="132"/>
        <end position="134"/>
    </location>
    <ligand>
        <name>2-[(2R,5Z)-2-carboxy-4-methylthiazol-5(2H)-ylidene]ethyl phosphate</name>
        <dbReference type="ChEBI" id="CHEBI:62899"/>
    </ligand>
</feature>
<feature type="binding site" evidence="1">
    <location>
        <position position="135"/>
    </location>
    <ligand>
        <name>4-amino-2-methyl-5-(diphosphooxymethyl)pyrimidine</name>
        <dbReference type="ChEBI" id="CHEBI:57841"/>
    </ligand>
</feature>
<feature type="binding site" evidence="1">
    <location>
        <position position="162"/>
    </location>
    <ligand>
        <name>2-[(2R,5Z)-2-carboxy-4-methylthiazol-5(2H)-ylidene]ethyl phosphate</name>
        <dbReference type="ChEBI" id="CHEBI:62899"/>
    </ligand>
</feature>
<organism>
    <name type="scientific">Pseudomonas putida (strain ATCC 700007 / DSM 6899 / JCM 31910 / BCRC 17059 / LMG 24140 / F1)</name>
    <dbReference type="NCBI Taxonomy" id="351746"/>
    <lineage>
        <taxon>Bacteria</taxon>
        <taxon>Pseudomonadati</taxon>
        <taxon>Pseudomonadota</taxon>
        <taxon>Gammaproteobacteria</taxon>
        <taxon>Pseudomonadales</taxon>
        <taxon>Pseudomonadaceae</taxon>
        <taxon>Pseudomonas</taxon>
    </lineage>
</organism>
<dbReference type="EC" id="2.5.1.3" evidence="1"/>
<dbReference type="EMBL" id="CP000712">
    <property type="protein sequence ID" value="ABQ80779.1"/>
    <property type="molecule type" value="Genomic_DNA"/>
</dbReference>
<dbReference type="SMR" id="A5W9G9"/>
<dbReference type="KEGG" id="ppf:Pput_4659"/>
<dbReference type="eggNOG" id="COG0352">
    <property type="taxonomic scope" value="Bacteria"/>
</dbReference>
<dbReference type="HOGENOM" id="CLU_018272_3_1_6"/>
<dbReference type="UniPathway" id="UPA00060">
    <property type="reaction ID" value="UER00141"/>
</dbReference>
<dbReference type="GO" id="GO:0005737">
    <property type="term" value="C:cytoplasm"/>
    <property type="evidence" value="ECO:0007669"/>
    <property type="project" value="TreeGrafter"/>
</dbReference>
<dbReference type="GO" id="GO:0000287">
    <property type="term" value="F:magnesium ion binding"/>
    <property type="evidence" value="ECO:0007669"/>
    <property type="project" value="UniProtKB-UniRule"/>
</dbReference>
<dbReference type="GO" id="GO:0004789">
    <property type="term" value="F:thiamine-phosphate diphosphorylase activity"/>
    <property type="evidence" value="ECO:0007669"/>
    <property type="project" value="UniProtKB-UniRule"/>
</dbReference>
<dbReference type="GO" id="GO:0009228">
    <property type="term" value="P:thiamine biosynthetic process"/>
    <property type="evidence" value="ECO:0007669"/>
    <property type="project" value="UniProtKB-KW"/>
</dbReference>
<dbReference type="GO" id="GO:0009229">
    <property type="term" value="P:thiamine diphosphate biosynthetic process"/>
    <property type="evidence" value="ECO:0007669"/>
    <property type="project" value="UniProtKB-UniRule"/>
</dbReference>
<dbReference type="CDD" id="cd00564">
    <property type="entry name" value="TMP_TenI"/>
    <property type="match status" value="1"/>
</dbReference>
<dbReference type="Gene3D" id="3.20.20.70">
    <property type="entry name" value="Aldolase class I"/>
    <property type="match status" value="1"/>
</dbReference>
<dbReference type="HAMAP" id="MF_00097">
    <property type="entry name" value="TMP_synthase"/>
    <property type="match status" value="1"/>
</dbReference>
<dbReference type="InterPro" id="IPR013785">
    <property type="entry name" value="Aldolase_TIM"/>
</dbReference>
<dbReference type="InterPro" id="IPR036206">
    <property type="entry name" value="ThiamineP_synth_sf"/>
</dbReference>
<dbReference type="InterPro" id="IPR022998">
    <property type="entry name" value="ThiamineP_synth_TenI"/>
</dbReference>
<dbReference type="InterPro" id="IPR034291">
    <property type="entry name" value="TMP_synthase"/>
</dbReference>
<dbReference type="NCBIfam" id="TIGR00693">
    <property type="entry name" value="thiE"/>
    <property type="match status" value="1"/>
</dbReference>
<dbReference type="PANTHER" id="PTHR20857">
    <property type="entry name" value="THIAMINE-PHOSPHATE PYROPHOSPHORYLASE"/>
    <property type="match status" value="1"/>
</dbReference>
<dbReference type="PANTHER" id="PTHR20857:SF15">
    <property type="entry name" value="THIAMINE-PHOSPHATE SYNTHASE"/>
    <property type="match status" value="1"/>
</dbReference>
<dbReference type="Pfam" id="PF02581">
    <property type="entry name" value="TMP-TENI"/>
    <property type="match status" value="1"/>
</dbReference>
<dbReference type="SUPFAM" id="SSF51391">
    <property type="entry name" value="Thiamin phosphate synthase"/>
    <property type="match status" value="1"/>
</dbReference>
<evidence type="ECO:0000255" key="1">
    <source>
        <dbReference type="HAMAP-Rule" id="MF_00097"/>
    </source>
</evidence>
<reference key="1">
    <citation type="submission" date="2007-05" db="EMBL/GenBank/DDBJ databases">
        <title>Complete sequence of Pseudomonas putida F1.</title>
        <authorList>
            <consortium name="US DOE Joint Genome Institute"/>
            <person name="Copeland A."/>
            <person name="Lucas S."/>
            <person name="Lapidus A."/>
            <person name="Barry K."/>
            <person name="Detter J.C."/>
            <person name="Glavina del Rio T."/>
            <person name="Hammon N."/>
            <person name="Israni S."/>
            <person name="Dalin E."/>
            <person name="Tice H."/>
            <person name="Pitluck S."/>
            <person name="Chain P."/>
            <person name="Malfatti S."/>
            <person name="Shin M."/>
            <person name="Vergez L."/>
            <person name="Schmutz J."/>
            <person name="Larimer F."/>
            <person name="Land M."/>
            <person name="Hauser L."/>
            <person name="Kyrpides N."/>
            <person name="Lykidis A."/>
            <person name="Parales R."/>
            <person name="Richardson P."/>
        </authorList>
    </citation>
    <scope>NUCLEOTIDE SEQUENCE [LARGE SCALE GENOMIC DNA]</scope>
    <source>
        <strain>ATCC 700007 / DSM 6899 / JCM 31910 / BCRC 17059 / LMG 24140 / F1</strain>
    </source>
</reference>
<proteinExistence type="inferred from homology"/>
<accession>A5W9G9</accession>
<gene>
    <name evidence="1" type="primary">thiE</name>
    <name type="ordered locus">Pput_4659</name>
</gene>
<name>THIE_PSEP1</name>
<sequence>MKLRGLYAITDSQLLAGRFLSHVEAALEGGVCLLQYRDKSDDAARRLREAEGLMKLCERYGTQLLINDDAELAARLGVGVHLGQTDGPLTPARALLGRQAIIGSTCHASLELAAQAASEGASYVAFGRFFNSVTKPGAPAANVGLLEQARAQVKLPIAVIGGITLDNAAPLVAHGADLLAVIHGLFGADSAQEVTRRARAFNALFAS</sequence>
<keyword id="KW-0460">Magnesium</keyword>
<keyword id="KW-0479">Metal-binding</keyword>
<keyword id="KW-0784">Thiamine biosynthesis</keyword>
<keyword id="KW-0808">Transferase</keyword>
<protein>
    <recommendedName>
        <fullName evidence="1">Thiamine-phosphate synthase</fullName>
        <shortName evidence="1">TP synthase</shortName>
        <shortName evidence="1">TPS</shortName>
        <ecNumber evidence="1">2.5.1.3</ecNumber>
    </recommendedName>
    <alternativeName>
        <fullName evidence="1">Thiamine-phosphate pyrophosphorylase</fullName>
        <shortName evidence="1">TMP pyrophosphorylase</shortName>
        <shortName evidence="1">TMP-PPase</shortName>
    </alternativeName>
</protein>
<comment type="function">
    <text evidence="1">Condenses 4-methyl-5-(beta-hydroxyethyl)thiazole monophosphate (THZ-P) and 2-methyl-4-amino-5-hydroxymethyl pyrimidine pyrophosphate (HMP-PP) to form thiamine monophosphate (TMP).</text>
</comment>
<comment type="catalytic activity">
    <reaction evidence="1">
        <text>2-[(2R,5Z)-2-carboxy-4-methylthiazol-5(2H)-ylidene]ethyl phosphate + 4-amino-2-methyl-5-(diphosphooxymethyl)pyrimidine + 2 H(+) = thiamine phosphate + CO2 + diphosphate</text>
        <dbReference type="Rhea" id="RHEA:47844"/>
        <dbReference type="ChEBI" id="CHEBI:15378"/>
        <dbReference type="ChEBI" id="CHEBI:16526"/>
        <dbReference type="ChEBI" id="CHEBI:33019"/>
        <dbReference type="ChEBI" id="CHEBI:37575"/>
        <dbReference type="ChEBI" id="CHEBI:57841"/>
        <dbReference type="ChEBI" id="CHEBI:62899"/>
        <dbReference type="EC" id="2.5.1.3"/>
    </reaction>
</comment>
<comment type="catalytic activity">
    <reaction evidence="1">
        <text>2-(2-carboxy-4-methylthiazol-5-yl)ethyl phosphate + 4-amino-2-methyl-5-(diphosphooxymethyl)pyrimidine + 2 H(+) = thiamine phosphate + CO2 + diphosphate</text>
        <dbReference type="Rhea" id="RHEA:47848"/>
        <dbReference type="ChEBI" id="CHEBI:15378"/>
        <dbReference type="ChEBI" id="CHEBI:16526"/>
        <dbReference type="ChEBI" id="CHEBI:33019"/>
        <dbReference type="ChEBI" id="CHEBI:37575"/>
        <dbReference type="ChEBI" id="CHEBI:57841"/>
        <dbReference type="ChEBI" id="CHEBI:62890"/>
        <dbReference type="EC" id="2.5.1.3"/>
    </reaction>
</comment>
<comment type="catalytic activity">
    <reaction evidence="1">
        <text>4-methyl-5-(2-phosphooxyethyl)-thiazole + 4-amino-2-methyl-5-(diphosphooxymethyl)pyrimidine + H(+) = thiamine phosphate + diphosphate</text>
        <dbReference type="Rhea" id="RHEA:22328"/>
        <dbReference type="ChEBI" id="CHEBI:15378"/>
        <dbReference type="ChEBI" id="CHEBI:33019"/>
        <dbReference type="ChEBI" id="CHEBI:37575"/>
        <dbReference type="ChEBI" id="CHEBI:57841"/>
        <dbReference type="ChEBI" id="CHEBI:58296"/>
        <dbReference type="EC" id="2.5.1.3"/>
    </reaction>
</comment>
<comment type="cofactor">
    <cofactor evidence="1">
        <name>Mg(2+)</name>
        <dbReference type="ChEBI" id="CHEBI:18420"/>
    </cofactor>
    <text evidence="1">Binds 1 Mg(2+) ion per subunit.</text>
</comment>
<comment type="pathway">
    <text evidence="1">Cofactor biosynthesis; thiamine diphosphate biosynthesis; thiamine phosphate from 4-amino-2-methyl-5-diphosphomethylpyrimidine and 4-methyl-5-(2-phosphoethyl)-thiazole: step 1/1.</text>
</comment>
<comment type="similarity">
    <text evidence="1">Belongs to the thiamine-phosphate synthase family.</text>
</comment>